<gene>
    <name type="primary">CHO2</name>
    <name type="ORF">PABG_00961</name>
</gene>
<protein>
    <recommendedName>
        <fullName evidence="1">Phosphatidylethanolamine N-methyltransferase</fullName>
        <shortName evidence="1">PE methyltransferase</shortName>
        <shortName evidence="1">PEAMT</shortName>
        <shortName evidence="1">PEMT</shortName>
        <ecNumber evidence="1">2.1.1.17</ecNumber>
    </recommendedName>
</protein>
<sequence length="979" mass="110545">MSGPASSTGFHIHAEGLHGRNVQPSKPTSDGGVAPTALGEKARVEEDERTDSEKKTFGRTPDGTIFTVPPTRDMVSQLLSPSEPKNLSDIFVLAIISCHIFLLRFLPSSSRVAAFAIIFLFWRAAYNIGIGWLLHMQSNGRTLVCWAKKSNIFVNPSTGQNPHPVLYNLLKWELETKIPEQYSFEDAPTEYNTWLVFRRVVDLILMCDFTSYCLFAIACGGRPAGEGFIMLALRWITGMSLVLFNLWVKLDAHRVVKDFAWYWGDFFYLIDQDLTFDGVFEMAPHPMYSVGYAGYYGISLMAASYKLLFISILAHAAQFAFLVLVENPHIEKTYNAPPPRKRVAVDTDNVKPQDDDVSQDSSVINDNVYSGQAVATLEPSSMHNLLGPHNIDLYRITDSSVLLIQILFSALAILTPSTPVYQFFFVLNAALWRVWYSVGIGYILNRQSHCKMWTRHFVKYGESNQEAWQQWKGTYHLSMTMTYASFIAATWKMYSFPQDWGYGLVLLRHILGASLIALQIWTSASIYESLGEFGWFFGDFFFDQSPKLTYSGIYRYLNNPERVLGLAGVWGAVLITSTKSVIFLALLSHTLTIAFIQLVERPHMQKLYGQSLRRDAGLVRSLKRSLPPSLKQFHGSVDKILDDSIEFIEEFIEAARPKLAAGVKTFVKDTSALFQKYPARITISRLEPDLAGYDQKDYSISLEGTQSSEPAQFERASGKEGEKARSMPDRRGDKKNLMFEYGAPIKVKWTAPLNHSKKDWIGLYMVTDNTSREITRISSQGRWIGTNKASFDSLTCEQGLISSDIVINKFREDGEPKDVASGEMVFSGDKLWWTQGVFEFRYHHNGKHSVMAVSRPFEIRIGRFDDDAIYGDRYGLVRAAIESALLPVVQNCFDRDPEIAPQTVEEQYGSLVDRNGKYSRRVVFAVHQMFGIEFAPEVVRADGNVRNLAWRICNAKKVLAPYSMSRTNGATTPTAEHEG</sequence>
<organism>
    <name type="scientific">Paracoccidioides brasiliensis (strain Pb03)</name>
    <dbReference type="NCBI Taxonomy" id="482561"/>
    <lineage>
        <taxon>Eukaryota</taxon>
        <taxon>Fungi</taxon>
        <taxon>Dikarya</taxon>
        <taxon>Ascomycota</taxon>
        <taxon>Pezizomycotina</taxon>
        <taxon>Eurotiomycetes</taxon>
        <taxon>Eurotiomycetidae</taxon>
        <taxon>Onygenales</taxon>
        <taxon>Ajellomycetaceae</taxon>
        <taxon>Paracoccidioides</taxon>
    </lineage>
</organism>
<accession>C0RZV6</accession>
<dbReference type="EC" id="2.1.1.17" evidence="1"/>
<dbReference type="EMBL" id="KN305531">
    <property type="protein sequence ID" value="EEH18398.2"/>
    <property type="molecule type" value="Genomic_DNA"/>
</dbReference>
<dbReference type="SMR" id="C0RZV6"/>
<dbReference type="VEuPathDB" id="FungiDB:PABG_00961"/>
<dbReference type="HOGENOM" id="CLU_005987_0_0_1"/>
<dbReference type="OrthoDB" id="12130at33183"/>
<dbReference type="UniPathway" id="UPA00753"/>
<dbReference type="GO" id="GO:0005789">
    <property type="term" value="C:endoplasmic reticulum membrane"/>
    <property type="evidence" value="ECO:0007669"/>
    <property type="project" value="UniProtKB-SubCell"/>
</dbReference>
<dbReference type="GO" id="GO:0004608">
    <property type="term" value="F:phosphatidylethanolamine N-methyltransferase activity"/>
    <property type="evidence" value="ECO:0007669"/>
    <property type="project" value="UniProtKB-UniRule"/>
</dbReference>
<dbReference type="GO" id="GO:0032259">
    <property type="term" value="P:methylation"/>
    <property type="evidence" value="ECO:0007669"/>
    <property type="project" value="UniProtKB-KW"/>
</dbReference>
<dbReference type="GO" id="GO:0006656">
    <property type="term" value="P:phosphatidylcholine biosynthetic process"/>
    <property type="evidence" value="ECO:0007669"/>
    <property type="project" value="UniProtKB-UniRule"/>
</dbReference>
<dbReference type="FunFam" id="2.60.40.2840:FF:000006">
    <property type="entry name" value="Phosphatidylethanolamine N-methyltransferase"/>
    <property type="match status" value="1"/>
</dbReference>
<dbReference type="Gene3D" id="2.60.40.2840">
    <property type="match status" value="1"/>
</dbReference>
<dbReference type="HAMAP" id="MF_03217">
    <property type="entry name" value="PEMT"/>
    <property type="match status" value="1"/>
</dbReference>
<dbReference type="InterPro" id="IPR007318">
    <property type="entry name" value="Phopholipid_MeTrfase"/>
</dbReference>
<dbReference type="InterPro" id="IPR016219">
    <property type="entry name" value="Phosphatid-EA_MeTrfase_fun"/>
</dbReference>
<dbReference type="PANTHER" id="PTHR32138">
    <property type="entry name" value="PHOSPHATIDYLETHANOLAMINE N-METHYLTRANSFERASE"/>
    <property type="match status" value="1"/>
</dbReference>
<dbReference type="PANTHER" id="PTHR32138:SF0">
    <property type="entry name" value="PHOSPHATIDYLETHANOLAMINE N-METHYLTRANSFERASE"/>
    <property type="match status" value="1"/>
</dbReference>
<dbReference type="Pfam" id="PF04191">
    <property type="entry name" value="PEMT"/>
    <property type="match status" value="2"/>
</dbReference>
<dbReference type="PIRSF" id="PIRSF000383">
    <property type="entry name" value="PEAMT"/>
    <property type="match status" value="1"/>
</dbReference>
<dbReference type="PROSITE" id="PS51598">
    <property type="entry name" value="SAM_CHO2"/>
    <property type="match status" value="1"/>
</dbReference>
<comment type="function">
    <text evidence="1">Catalyzes the first step of the methylation pathway of phosphatidylcholine biosynthesis, the SAM-dependent methylation of phosphatidylethanolamine (PE) to phosphatidylmonomethylethanolamine (PMME).</text>
</comment>
<comment type="catalytic activity">
    <reaction evidence="1">
        <text>a 1,2-diacyl-sn-glycero-3-phosphoethanolamine + S-adenosyl-L-methionine = a 1,2-diacyl-sn-glycero-3-phospho-N-methylethanolamine + S-adenosyl-L-homocysteine + H(+)</text>
        <dbReference type="Rhea" id="RHEA:11164"/>
        <dbReference type="ChEBI" id="CHEBI:15378"/>
        <dbReference type="ChEBI" id="CHEBI:57856"/>
        <dbReference type="ChEBI" id="CHEBI:59789"/>
        <dbReference type="ChEBI" id="CHEBI:64573"/>
        <dbReference type="ChEBI" id="CHEBI:64612"/>
        <dbReference type="EC" id="2.1.1.17"/>
    </reaction>
</comment>
<comment type="pathway">
    <text evidence="1">Phospholipid metabolism; phosphatidylcholine biosynthesis.</text>
</comment>
<comment type="subcellular location">
    <subcellularLocation>
        <location evidence="1">Endoplasmic reticulum membrane</location>
        <topology evidence="1">Multi-pass membrane protein</topology>
    </subcellularLocation>
</comment>
<comment type="similarity">
    <text evidence="1">Belongs to the class VI-like SAM-binding methyltransferase superfamily. CHO2 family.</text>
</comment>
<name>CHO2_PARBP</name>
<proteinExistence type="inferred from homology"/>
<keyword id="KW-0256">Endoplasmic reticulum</keyword>
<keyword id="KW-0444">Lipid biosynthesis</keyword>
<keyword id="KW-0443">Lipid metabolism</keyword>
<keyword id="KW-0472">Membrane</keyword>
<keyword id="KW-0489">Methyltransferase</keyword>
<keyword id="KW-0594">Phospholipid biosynthesis</keyword>
<keyword id="KW-1208">Phospholipid metabolism</keyword>
<keyword id="KW-0949">S-adenosyl-L-methionine</keyword>
<keyword id="KW-0808">Transferase</keyword>
<keyword id="KW-0812">Transmembrane</keyword>
<keyword id="KW-1133">Transmembrane helix</keyword>
<feature type="chain" id="PRO_0000405902" description="Phosphatidylethanolamine N-methyltransferase">
    <location>
        <begin position="1"/>
        <end position="979"/>
    </location>
</feature>
<feature type="topological domain" description="Lumenal" evidence="1">
    <location>
        <begin position="1"/>
        <end position="86"/>
    </location>
</feature>
<feature type="transmembrane region" description="Helical" evidence="1">
    <location>
        <begin position="87"/>
        <end position="107"/>
    </location>
</feature>
<feature type="topological domain" description="Cytoplasmic" evidence="1">
    <location>
        <begin position="108"/>
        <end position="113"/>
    </location>
</feature>
<feature type="transmembrane region" description="Helical" evidence="1">
    <location>
        <begin position="114"/>
        <end position="134"/>
    </location>
</feature>
<feature type="topological domain" description="Lumenal" evidence="1">
    <location>
        <begin position="135"/>
        <end position="199"/>
    </location>
</feature>
<feature type="transmembrane region" description="Helical" evidence="1">
    <location>
        <begin position="200"/>
        <end position="220"/>
    </location>
</feature>
<feature type="topological domain" description="Cytoplasmic" evidence="1">
    <location>
        <begin position="221"/>
        <end position="227"/>
    </location>
</feature>
<feature type="transmembrane region" description="Helical" evidence="1">
    <location>
        <begin position="228"/>
        <end position="248"/>
    </location>
</feature>
<feature type="topological domain" description="Lumenal" evidence="1">
    <location>
        <begin position="249"/>
        <end position="281"/>
    </location>
</feature>
<feature type="transmembrane region" description="Helical" evidence="1">
    <location>
        <begin position="282"/>
        <end position="302"/>
    </location>
</feature>
<feature type="topological domain" description="Cytoplasmic" evidence="1">
    <location>
        <begin position="303"/>
        <end position="304"/>
    </location>
</feature>
<feature type="transmembrane region" description="Helical" evidence="1">
    <location>
        <begin position="305"/>
        <end position="325"/>
    </location>
</feature>
<feature type="topological domain" description="Lumenal" evidence="1">
    <location>
        <begin position="326"/>
        <end position="398"/>
    </location>
</feature>
<feature type="transmembrane region" description="Helical" evidence="1">
    <location>
        <begin position="399"/>
        <end position="418"/>
    </location>
</feature>
<feature type="topological domain" description="Cytoplasmic" evidence="1">
    <location>
        <begin position="419"/>
        <end position="422"/>
    </location>
</feature>
<feature type="transmembrane region" description="Helical" evidence="1">
    <location>
        <begin position="423"/>
        <end position="445"/>
    </location>
</feature>
<feature type="topological domain" description="Lumenal" evidence="1">
    <location>
        <begin position="446"/>
        <end position="474"/>
    </location>
</feature>
<feature type="transmembrane region" description="Helical" evidence="1">
    <location>
        <begin position="475"/>
        <end position="494"/>
    </location>
</feature>
<feature type="topological domain" description="Cytoplasmic" evidence="1">
    <location>
        <begin position="495"/>
        <end position="499"/>
    </location>
</feature>
<feature type="transmembrane region" description="Helical" evidence="1">
    <location>
        <begin position="500"/>
        <end position="520"/>
    </location>
</feature>
<feature type="topological domain" description="Lumenal" evidence="1">
    <location>
        <begin position="521"/>
        <end position="565"/>
    </location>
</feature>
<feature type="transmembrane region" description="Helical" evidence="1">
    <location>
        <begin position="566"/>
        <end position="586"/>
    </location>
</feature>
<feature type="topological domain" description="Cytoplasmic" evidence="1">
    <location>
        <begin position="587"/>
        <end position="979"/>
    </location>
</feature>
<feature type="region of interest" description="Disordered" evidence="2">
    <location>
        <begin position="1"/>
        <end position="63"/>
    </location>
</feature>
<feature type="region of interest" description="Disordered" evidence="2">
    <location>
        <begin position="704"/>
        <end position="732"/>
    </location>
</feature>
<feature type="compositionally biased region" description="Basic and acidic residues" evidence="2">
    <location>
        <begin position="40"/>
        <end position="56"/>
    </location>
</feature>
<feature type="compositionally biased region" description="Basic and acidic residues" evidence="2">
    <location>
        <begin position="716"/>
        <end position="732"/>
    </location>
</feature>
<reference key="1">
    <citation type="journal article" date="2011" name="PLoS Genet.">
        <title>Comparative genomic analysis of human fungal pathogens causing paracoccidioidomycosis.</title>
        <authorList>
            <person name="Desjardins C.A."/>
            <person name="Champion M.D."/>
            <person name="Holder J.W."/>
            <person name="Muszewska A."/>
            <person name="Goldberg J."/>
            <person name="Bailao A.M."/>
            <person name="Brigido M.M."/>
            <person name="Ferreira M.E."/>
            <person name="Garcia A.M."/>
            <person name="Grynberg M."/>
            <person name="Gujja S."/>
            <person name="Heiman D.I."/>
            <person name="Henn M.R."/>
            <person name="Kodira C.D."/>
            <person name="Leon-Narvaez H."/>
            <person name="Longo L.V.G."/>
            <person name="Ma L.-J."/>
            <person name="Malavazi I."/>
            <person name="Matsuo A.L."/>
            <person name="Morais F.V."/>
            <person name="Pereira M."/>
            <person name="Rodriguez-Brito S."/>
            <person name="Sakthikumar S."/>
            <person name="Salem-Izacc S.M."/>
            <person name="Sykes S.M."/>
            <person name="Teixeira M.M."/>
            <person name="Vallejo M.C."/>
            <person name="Walter M.E."/>
            <person name="Yandava C."/>
            <person name="Young S."/>
            <person name="Zeng Q."/>
            <person name="Zucker J."/>
            <person name="Felipe M.S."/>
            <person name="Goldman G.H."/>
            <person name="Haas B.J."/>
            <person name="McEwen J.G."/>
            <person name="Nino-Vega G."/>
            <person name="Puccia R."/>
            <person name="San-Blas G."/>
            <person name="Soares C.M."/>
            <person name="Birren B.W."/>
            <person name="Cuomo C.A."/>
        </authorList>
    </citation>
    <scope>NUCLEOTIDE SEQUENCE [LARGE SCALE GENOMIC DNA]</scope>
    <source>
        <strain>Pb03</strain>
    </source>
</reference>
<evidence type="ECO:0000255" key="1">
    <source>
        <dbReference type="HAMAP-Rule" id="MF_03217"/>
    </source>
</evidence>
<evidence type="ECO:0000256" key="2">
    <source>
        <dbReference type="SAM" id="MobiDB-lite"/>
    </source>
</evidence>